<feature type="chain" id="PRO_1000201070" description="Phosphoglucosamine mutase">
    <location>
        <begin position="1"/>
        <end position="452"/>
    </location>
</feature>
<feature type="active site" description="Phosphoserine intermediate" evidence="1">
    <location>
        <position position="108"/>
    </location>
</feature>
<feature type="binding site" description="via phosphate group" evidence="1">
    <location>
        <position position="108"/>
    </location>
    <ligand>
        <name>Mg(2+)</name>
        <dbReference type="ChEBI" id="CHEBI:18420"/>
    </ligand>
</feature>
<feature type="binding site" evidence="1">
    <location>
        <position position="247"/>
    </location>
    <ligand>
        <name>Mg(2+)</name>
        <dbReference type="ChEBI" id="CHEBI:18420"/>
    </ligand>
</feature>
<feature type="binding site" evidence="1">
    <location>
        <position position="249"/>
    </location>
    <ligand>
        <name>Mg(2+)</name>
        <dbReference type="ChEBI" id="CHEBI:18420"/>
    </ligand>
</feature>
<feature type="binding site" evidence="1">
    <location>
        <position position="251"/>
    </location>
    <ligand>
        <name>Mg(2+)</name>
        <dbReference type="ChEBI" id="CHEBI:18420"/>
    </ligand>
</feature>
<feature type="modified residue" description="Phosphoserine" evidence="1">
    <location>
        <position position="108"/>
    </location>
</feature>
<comment type="function">
    <text evidence="1">Catalyzes the conversion of glucosamine-6-phosphate to glucosamine-1-phosphate.</text>
</comment>
<comment type="catalytic activity">
    <reaction evidence="1">
        <text>alpha-D-glucosamine 1-phosphate = D-glucosamine 6-phosphate</text>
        <dbReference type="Rhea" id="RHEA:23424"/>
        <dbReference type="ChEBI" id="CHEBI:58516"/>
        <dbReference type="ChEBI" id="CHEBI:58725"/>
        <dbReference type="EC" id="5.4.2.10"/>
    </reaction>
</comment>
<comment type="cofactor">
    <cofactor evidence="1">
        <name>Mg(2+)</name>
        <dbReference type="ChEBI" id="CHEBI:18420"/>
    </cofactor>
    <text evidence="1">Binds 1 Mg(2+) ion per subunit.</text>
</comment>
<comment type="PTM">
    <text evidence="1">Activated by phosphorylation.</text>
</comment>
<comment type="similarity">
    <text evidence="1">Belongs to the phosphohexose mutase family.</text>
</comment>
<evidence type="ECO:0000255" key="1">
    <source>
        <dbReference type="HAMAP-Rule" id="MF_01554"/>
    </source>
</evidence>
<reference key="1">
    <citation type="journal article" date="2014" name="Stand. Genomic Sci.">
        <title>Complete genome sequence of Burkholderia phymatum STM815(T), a broad host range and efficient nitrogen-fixing symbiont of Mimosa species.</title>
        <authorList>
            <person name="Moulin L."/>
            <person name="Klonowska A."/>
            <person name="Caroline B."/>
            <person name="Booth K."/>
            <person name="Vriezen J.A."/>
            <person name="Melkonian R."/>
            <person name="James E.K."/>
            <person name="Young J.P."/>
            <person name="Bena G."/>
            <person name="Hauser L."/>
            <person name="Land M."/>
            <person name="Kyrpides N."/>
            <person name="Bruce D."/>
            <person name="Chain P."/>
            <person name="Copeland A."/>
            <person name="Pitluck S."/>
            <person name="Woyke T."/>
            <person name="Lizotte-Waniewski M."/>
            <person name="Bristow J."/>
            <person name="Riley M."/>
        </authorList>
    </citation>
    <scope>NUCLEOTIDE SEQUENCE [LARGE SCALE GENOMIC DNA]</scope>
    <source>
        <strain>DSM 17167 / CIP 108236 / LMG 21445 / STM815</strain>
    </source>
</reference>
<protein>
    <recommendedName>
        <fullName evidence="1">Phosphoglucosamine mutase</fullName>
        <ecNumber evidence="1">5.4.2.10</ecNumber>
    </recommendedName>
</protein>
<dbReference type="EC" id="5.4.2.10" evidence="1"/>
<dbReference type="EMBL" id="CP001043">
    <property type="protein sequence ID" value="ACC70070.1"/>
    <property type="molecule type" value="Genomic_DNA"/>
</dbReference>
<dbReference type="RefSeq" id="WP_012400289.1">
    <property type="nucleotide sequence ID" value="NC_010622.1"/>
</dbReference>
<dbReference type="SMR" id="B2JFP2"/>
<dbReference type="STRING" id="391038.Bphy_0881"/>
<dbReference type="KEGG" id="bph:Bphy_0881"/>
<dbReference type="eggNOG" id="COG1109">
    <property type="taxonomic scope" value="Bacteria"/>
</dbReference>
<dbReference type="HOGENOM" id="CLU_016950_7_0_4"/>
<dbReference type="OrthoDB" id="9803322at2"/>
<dbReference type="Proteomes" id="UP000001192">
    <property type="component" value="Chromosome 1"/>
</dbReference>
<dbReference type="GO" id="GO:0005829">
    <property type="term" value="C:cytosol"/>
    <property type="evidence" value="ECO:0007669"/>
    <property type="project" value="TreeGrafter"/>
</dbReference>
<dbReference type="GO" id="GO:0000287">
    <property type="term" value="F:magnesium ion binding"/>
    <property type="evidence" value="ECO:0007669"/>
    <property type="project" value="UniProtKB-UniRule"/>
</dbReference>
<dbReference type="GO" id="GO:0008966">
    <property type="term" value="F:phosphoglucosamine mutase activity"/>
    <property type="evidence" value="ECO:0007669"/>
    <property type="project" value="UniProtKB-UniRule"/>
</dbReference>
<dbReference type="GO" id="GO:0004615">
    <property type="term" value="F:phosphomannomutase activity"/>
    <property type="evidence" value="ECO:0007669"/>
    <property type="project" value="TreeGrafter"/>
</dbReference>
<dbReference type="GO" id="GO:0005975">
    <property type="term" value="P:carbohydrate metabolic process"/>
    <property type="evidence" value="ECO:0007669"/>
    <property type="project" value="InterPro"/>
</dbReference>
<dbReference type="GO" id="GO:0009252">
    <property type="term" value="P:peptidoglycan biosynthetic process"/>
    <property type="evidence" value="ECO:0007669"/>
    <property type="project" value="TreeGrafter"/>
</dbReference>
<dbReference type="GO" id="GO:0006048">
    <property type="term" value="P:UDP-N-acetylglucosamine biosynthetic process"/>
    <property type="evidence" value="ECO:0007669"/>
    <property type="project" value="TreeGrafter"/>
</dbReference>
<dbReference type="CDD" id="cd05802">
    <property type="entry name" value="GlmM"/>
    <property type="match status" value="1"/>
</dbReference>
<dbReference type="FunFam" id="3.30.310.50:FF:000001">
    <property type="entry name" value="Phosphoglucosamine mutase"/>
    <property type="match status" value="1"/>
</dbReference>
<dbReference type="FunFam" id="3.40.120.10:FF:000001">
    <property type="entry name" value="Phosphoglucosamine mutase"/>
    <property type="match status" value="1"/>
</dbReference>
<dbReference type="FunFam" id="3.40.120.10:FF:000003">
    <property type="entry name" value="Phosphoglucosamine mutase"/>
    <property type="match status" value="1"/>
</dbReference>
<dbReference type="Gene3D" id="3.40.120.10">
    <property type="entry name" value="Alpha-D-Glucose-1,6-Bisphosphate, subunit A, domain 3"/>
    <property type="match status" value="3"/>
</dbReference>
<dbReference type="Gene3D" id="3.30.310.50">
    <property type="entry name" value="Alpha-D-phosphohexomutase, C-terminal domain"/>
    <property type="match status" value="1"/>
</dbReference>
<dbReference type="HAMAP" id="MF_01554_B">
    <property type="entry name" value="GlmM_B"/>
    <property type="match status" value="1"/>
</dbReference>
<dbReference type="InterPro" id="IPR005844">
    <property type="entry name" value="A-D-PHexomutase_a/b/a-I"/>
</dbReference>
<dbReference type="InterPro" id="IPR016055">
    <property type="entry name" value="A-D-PHexomutase_a/b/a-I/II/III"/>
</dbReference>
<dbReference type="InterPro" id="IPR005845">
    <property type="entry name" value="A-D-PHexomutase_a/b/a-II"/>
</dbReference>
<dbReference type="InterPro" id="IPR005846">
    <property type="entry name" value="A-D-PHexomutase_a/b/a-III"/>
</dbReference>
<dbReference type="InterPro" id="IPR005843">
    <property type="entry name" value="A-D-PHexomutase_C"/>
</dbReference>
<dbReference type="InterPro" id="IPR036900">
    <property type="entry name" value="A-D-PHexomutase_C_sf"/>
</dbReference>
<dbReference type="InterPro" id="IPR016066">
    <property type="entry name" value="A-D-PHexomutase_CS"/>
</dbReference>
<dbReference type="InterPro" id="IPR005841">
    <property type="entry name" value="Alpha-D-phosphohexomutase_SF"/>
</dbReference>
<dbReference type="InterPro" id="IPR006352">
    <property type="entry name" value="GlmM_bact"/>
</dbReference>
<dbReference type="InterPro" id="IPR050060">
    <property type="entry name" value="Phosphoglucosamine_mutase"/>
</dbReference>
<dbReference type="NCBIfam" id="TIGR01455">
    <property type="entry name" value="glmM"/>
    <property type="match status" value="1"/>
</dbReference>
<dbReference type="NCBIfam" id="NF008139">
    <property type="entry name" value="PRK10887.1"/>
    <property type="match status" value="1"/>
</dbReference>
<dbReference type="PANTHER" id="PTHR42946:SF1">
    <property type="entry name" value="PHOSPHOGLUCOMUTASE (ALPHA-D-GLUCOSE-1,6-BISPHOSPHATE-DEPENDENT)"/>
    <property type="match status" value="1"/>
</dbReference>
<dbReference type="PANTHER" id="PTHR42946">
    <property type="entry name" value="PHOSPHOHEXOSE MUTASE"/>
    <property type="match status" value="1"/>
</dbReference>
<dbReference type="Pfam" id="PF02878">
    <property type="entry name" value="PGM_PMM_I"/>
    <property type="match status" value="1"/>
</dbReference>
<dbReference type="Pfam" id="PF02879">
    <property type="entry name" value="PGM_PMM_II"/>
    <property type="match status" value="1"/>
</dbReference>
<dbReference type="Pfam" id="PF02880">
    <property type="entry name" value="PGM_PMM_III"/>
    <property type="match status" value="1"/>
</dbReference>
<dbReference type="Pfam" id="PF00408">
    <property type="entry name" value="PGM_PMM_IV"/>
    <property type="match status" value="1"/>
</dbReference>
<dbReference type="PRINTS" id="PR00509">
    <property type="entry name" value="PGMPMM"/>
</dbReference>
<dbReference type="SUPFAM" id="SSF55957">
    <property type="entry name" value="Phosphoglucomutase, C-terminal domain"/>
    <property type="match status" value="1"/>
</dbReference>
<dbReference type="SUPFAM" id="SSF53738">
    <property type="entry name" value="Phosphoglucomutase, first 3 domains"/>
    <property type="match status" value="3"/>
</dbReference>
<dbReference type="PROSITE" id="PS00710">
    <property type="entry name" value="PGM_PMM"/>
    <property type="match status" value="1"/>
</dbReference>
<sequence>MARRYFGTDGIRGKVGDPPITPDFVLRLGYAAGKVLAGADTWAKTGSRPTVLIGKDTRVSGYMLEAALESGFSAAGVDVMLAGPMPTPGVAYLTRALRLAAGVVISASHNPYYDNGIKFFSADGNKLPDEVESQIEEQLDKPLECAPSERLGKARRLDDAAGRYIEFCKGTFPQAFDLRGMKLVVDCAHGAAYDVAPHVFHELGADVITIGVSPNGFNINDGVGATAPDALVRAVRANKADLGVALDGDADRLQIVDANGRLYNGDELLYVLVQDRIATQGKVDGAVGTLMTNMAVEVALKNKGVQFVRAAVGDRYVLEKLREHGWELGAEGSGHILSLDRHSTGDGIVSALLVLAAMQRSGRSLEQLLEGVTLFPQKLINVRMQPGADWKGNDAIRRAINEAEGALDGSGRVLIRASGTEPVLRVMVEAAHEKDAVHHAERIATVVKQATS</sequence>
<organism>
    <name type="scientific">Paraburkholderia phymatum (strain DSM 17167 / CIP 108236 / LMG 21445 / STM815)</name>
    <name type="common">Burkholderia phymatum</name>
    <dbReference type="NCBI Taxonomy" id="391038"/>
    <lineage>
        <taxon>Bacteria</taxon>
        <taxon>Pseudomonadati</taxon>
        <taxon>Pseudomonadota</taxon>
        <taxon>Betaproteobacteria</taxon>
        <taxon>Burkholderiales</taxon>
        <taxon>Burkholderiaceae</taxon>
        <taxon>Paraburkholderia</taxon>
    </lineage>
</organism>
<gene>
    <name evidence="1" type="primary">glmM</name>
    <name type="ordered locus">Bphy_0881</name>
</gene>
<accession>B2JFP2</accession>
<keyword id="KW-0413">Isomerase</keyword>
<keyword id="KW-0460">Magnesium</keyword>
<keyword id="KW-0479">Metal-binding</keyword>
<keyword id="KW-0597">Phosphoprotein</keyword>
<keyword id="KW-1185">Reference proteome</keyword>
<proteinExistence type="inferred from homology"/>
<name>GLMM_PARP8</name>